<protein>
    <recommendedName>
        <fullName evidence="1">Dehydrogenase/reductase SDR family member 4</fullName>
        <ecNumber evidence="1">1.1.1.184</ecNumber>
        <ecNumber evidence="1">1.1.1.300</ecNumber>
    </recommendedName>
    <alternativeName>
        <fullName evidence="1">NADPH-dependent carbonyl reductase</fullName>
        <shortName evidence="1">CR</shortName>
    </alternativeName>
    <alternativeName>
        <fullName evidence="1">NADPH-dependent retinol dehydrogenase/reductase</fullName>
        <shortName evidence="1">NDRD</shortName>
        <shortName>mouNRDR</shortName>
    </alternativeName>
    <alternativeName>
        <fullName>Peroxisomal short-chain alcohol dehydrogenase</fullName>
        <shortName>PSCD</shortName>
    </alternativeName>
    <alternativeName>
        <fullName evidence="3">Short chain dehydrogenase/reductase family 25C member 2</fullName>
        <shortName evidence="3">Protein SDR25C2</shortName>
    </alternativeName>
</protein>
<proteinExistence type="evidence at protein level"/>
<feature type="chain" id="PRO_0000054648" description="Dehydrogenase/reductase SDR family member 4">
    <location>
        <begin position="1"/>
        <end position="279"/>
    </location>
</feature>
<feature type="short sequence motif" description="Peroxisomal targeting signal">
    <location>
        <begin position="277"/>
        <end position="279"/>
    </location>
</feature>
<feature type="active site" description="Proton acceptor" evidence="4">
    <location>
        <position position="183"/>
    </location>
</feature>
<feature type="binding site" evidence="1">
    <location>
        <begin position="37"/>
        <end position="61"/>
    </location>
    <ligand>
        <name>NADP(+)</name>
        <dbReference type="ChEBI" id="CHEBI:58349"/>
    </ligand>
</feature>
<feature type="binding site" evidence="2">
    <location>
        <position position="170"/>
    </location>
    <ligand>
        <name>substrate</name>
    </ligand>
</feature>
<feature type="binding site" evidence="1">
    <location>
        <position position="187"/>
    </location>
    <ligand>
        <name>NADP(+)</name>
        <dbReference type="ChEBI" id="CHEBI:58349"/>
    </ligand>
</feature>
<feature type="site" description="Responsible for the stereoselective reduction of 3-ketosteroids into 3alpha-hydroxysteroids and benzil into S-benzoin" evidence="1">
    <location>
        <position position="177"/>
    </location>
</feature>
<feature type="site" description="Responsible for the stereoselective reduction of 3-ketosteroids into 3alpha-hydroxysteroids and benzil into S-benzoin" evidence="1">
    <location>
        <position position="180"/>
    </location>
</feature>
<feature type="site" description="Important for the maintenance of the quaternary structure, the catalytic activity and cold stability" evidence="1">
    <location>
        <position position="196"/>
    </location>
</feature>
<feature type="modified residue" description="N6-acetyllysine; alternate" evidence="8">
    <location>
        <position position="93"/>
    </location>
</feature>
<feature type="modified residue" description="N6-succinyllysine; alternate" evidence="9">
    <location>
        <position position="93"/>
    </location>
</feature>
<feature type="modified residue" description="N6-acetyllysine" evidence="8">
    <location>
        <position position="106"/>
    </location>
</feature>
<feature type="modified residue" description="N6-acetyllysine; alternate" evidence="8">
    <location>
        <position position="217"/>
    </location>
</feature>
<feature type="modified residue" description="N6-succinyllysine; alternate" evidence="9">
    <location>
        <position position="217"/>
    </location>
</feature>
<feature type="modified residue" description="Phosphoserine" evidence="7">
    <location>
        <position position="221"/>
    </location>
</feature>
<feature type="modified residue" description="N6-succinyllysine" evidence="9">
    <location>
        <position position="228"/>
    </location>
</feature>
<feature type="modified residue" description="N6-succinyllysine" evidence="9">
    <location>
        <position position="235"/>
    </location>
</feature>
<feature type="sequence conflict" description="In Ref. 4; AAH03484/AAH54361." evidence="5" ref="4">
    <original>Q</original>
    <variation>R</variation>
    <location>
        <position position="109"/>
    </location>
</feature>
<accession>Q99LB2</accession>
<accession>G3X8V7</accession>
<accession>Q9EQU4</accession>
<reference key="1">
    <citation type="submission" date="2000-06" db="EMBL/GenBank/DDBJ databases">
        <title>cDNA cloning and characterization of peroxisomal short-chain dehydrogenase / reductase that reduce all-trans retinal to retinol.</title>
        <authorList>
            <person name="Furukawa A."/>
            <person name="Ohnishi T."/>
            <person name="Huang D."/>
            <person name="Araki N."/>
            <person name="Ichikawa Y."/>
        </authorList>
    </citation>
    <scope>NUCLEOTIDE SEQUENCE [MRNA]</scope>
    <source>
        <strain>C57BL/6J</strain>
        <tissue>Liver</tissue>
    </source>
</reference>
<reference key="2">
    <citation type="journal article" date="2009" name="PLoS Biol.">
        <title>Lineage-specific biology revealed by a finished genome assembly of the mouse.</title>
        <authorList>
            <person name="Church D.M."/>
            <person name="Goodstadt L."/>
            <person name="Hillier L.W."/>
            <person name="Zody M.C."/>
            <person name="Goldstein S."/>
            <person name="She X."/>
            <person name="Bult C.J."/>
            <person name="Agarwala R."/>
            <person name="Cherry J.L."/>
            <person name="DiCuccio M."/>
            <person name="Hlavina W."/>
            <person name="Kapustin Y."/>
            <person name="Meric P."/>
            <person name="Maglott D."/>
            <person name="Birtle Z."/>
            <person name="Marques A.C."/>
            <person name="Graves T."/>
            <person name="Zhou S."/>
            <person name="Teague B."/>
            <person name="Potamousis K."/>
            <person name="Churas C."/>
            <person name="Place M."/>
            <person name="Herschleb J."/>
            <person name="Runnheim R."/>
            <person name="Forrest D."/>
            <person name="Amos-Landgraf J."/>
            <person name="Schwartz D.C."/>
            <person name="Cheng Z."/>
            <person name="Lindblad-Toh K."/>
            <person name="Eichler E.E."/>
            <person name="Ponting C.P."/>
        </authorList>
    </citation>
    <scope>NUCLEOTIDE SEQUENCE [LARGE SCALE GENOMIC DNA]</scope>
    <source>
        <strain>C57BL/6J</strain>
    </source>
</reference>
<reference key="3">
    <citation type="submission" date="2005-07" db="EMBL/GenBank/DDBJ databases">
        <authorList>
            <person name="Mural R.J."/>
            <person name="Adams M.D."/>
            <person name="Myers E.W."/>
            <person name="Smith H.O."/>
            <person name="Venter J.C."/>
        </authorList>
    </citation>
    <scope>NUCLEOTIDE SEQUENCE [LARGE SCALE GENOMIC DNA]</scope>
</reference>
<reference key="4">
    <citation type="journal article" date="2004" name="Genome Res.">
        <title>The status, quality, and expansion of the NIH full-length cDNA project: the Mammalian Gene Collection (MGC).</title>
        <authorList>
            <consortium name="The MGC Project Team"/>
        </authorList>
    </citation>
    <scope>NUCLEOTIDE SEQUENCE [LARGE SCALE MRNA]</scope>
    <source>
        <tissue>Mammary tumor</tissue>
    </source>
</reference>
<reference key="5">
    <citation type="journal article" date="2010" name="Cell">
        <title>A tissue-specific atlas of mouse protein phosphorylation and expression.</title>
        <authorList>
            <person name="Huttlin E.L."/>
            <person name="Jedrychowski M.P."/>
            <person name="Elias J.E."/>
            <person name="Goswami T."/>
            <person name="Rad R."/>
            <person name="Beausoleil S.A."/>
            <person name="Villen J."/>
            <person name="Haas W."/>
            <person name="Sowa M.E."/>
            <person name="Gygi S.P."/>
        </authorList>
    </citation>
    <scope>PHOSPHORYLATION [LARGE SCALE ANALYSIS] AT SER-221</scope>
    <scope>IDENTIFICATION BY MASS SPECTROMETRY [LARGE SCALE ANALYSIS]</scope>
    <source>
        <tissue>Brain</tissue>
        <tissue>Brown adipose tissue</tissue>
        <tissue>Heart</tissue>
        <tissue>Kidney</tissue>
        <tissue>Liver</tissue>
        <tissue>Pancreas</tissue>
        <tissue>Testis</tissue>
    </source>
</reference>
<reference key="6">
    <citation type="journal article" date="2013" name="Mol. Cell">
        <title>SIRT5-mediated lysine desuccinylation impacts diverse metabolic pathways.</title>
        <authorList>
            <person name="Park J."/>
            <person name="Chen Y."/>
            <person name="Tishkoff D.X."/>
            <person name="Peng C."/>
            <person name="Tan M."/>
            <person name="Dai L."/>
            <person name="Xie Z."/>
            <person name="Zhang Y."/>
            <person name="Zwaans B.M."/>
            <person name="Skinner M.E."/>
            <person name="Lombard D.B."/>
            <person name="Zhao Y."/>
        </authorList>
    </citation>
    <scope>SUCCINYLATION [LARGE SCALE ANALYSIS] AT LYS-93; LYS-217; LYS-228 AND LYS-235</scope>
    <scope>IDENTIFICATION BY MASS SPECTROMETRY [LARGE SCALE ANALYSIS]</scope>
    <source>
        <tissue>Liver</tissue>
    </source>
</reference>
<reference key="7">
    <citation type="journal article" date="2013" name="Proc. Natl. Acad. Sci. U.S.A.">
        <title>Label-free quantitative proteomics of the lysine acetylome in mitochondria identifies substrates of SIRT3 in metabolic pathways.</title>
        <authorList>
            <person name="Rardin M.J."/>
            <person name="Newman J.C."/>
            <person name="Held J.M."/>
            <person name="Cusack M.P."/>
            <person name="Sorensen D.J."/>
            <person name="Li B."/>
            <person name="Schilling B."/>
            <person name="Mooney S.D."/>
            <person name="Kahn C.R."/>
            <person name="Verdin E."/>
            <person name="Gibson B.W."/>
        </authorList>
    </citation>
    <scope>ACETYLATION [LARGE SCALE ANALYSIS] AT LYS-93; LYS-106 AND LYS-217</scope>
    <scope>IDENTIFICATION BY MASS SPECTROMETRY [LARGE SCALE ANALYSIS]</scope>
    <source>
        <tissue>Liver</tissue>
    </source>
</reference>
<gene>
    <name evidence="6" type="primary">Dhrs4</name>
    <name type="synonym">D14Ucla2</name>
</gene>
<keyword id="KW-0007">Acetylation</keyword>
<keyword id="KW-0521">NADP</keyword>
<keyword id="KW-0560">Oxidoreductase</keyword>
<keyword id="KW-0576">Peroxisome</keyword>
<keyword id="KW-0597">Phosphoprotein</keyword>
<keyword id="KW-1185">Reference proteome</keyword>
<dbReference type="EC" id="1.1.1.184" evidence="1"/>
<dbReference type="EC" id="1.1.1.300" evidence="1"/>
<dbReference type="EMBL" id="AB045132">
    <property type="protein sequence ID" value="BAB18776.1"/>
    <property type="status" value="ALT_INIT"/>
    <property type="molecule type" value="mRNA"/>
</dbReference>
<dbReference type="EMBL" id="AC159002">
    <property type="status" value="NOT_ANNOTATED_CDS"/>
    <property type="molecule type" value="Genomic_DNA"/>
</dbReference>
<dbReference type="EMBL" id="CH466535">
    <property type="protein sequence ID" value="EDL36299.1"/>
    <property type="molecule type" value="Genomic_DNA"/>
</dbReference>
<dbReference type="EMBL" id="BC003484">
    <property type="protein sequence ID" value="AAH03484.1"/>
    <property type="status" value="ALT_INIT"/>
    <property type="molecule type" value="mRNA"/>
</dbReference>
<dbReference type="EMBL" id="BC054361">
    <property type="protein sequence ID" value="AAH54361.1"/>
    <property type="molecule type" value="mRNA"/>
</dbReference>
<dbReference type="CCDS" id="CCDS27111.1"/>
<dbReference type="RefSeq" id="NP_001033027.2">
    <property type="nucleotide sequence ID" value="NM_001037938.2"/>
</dbReference>
<dbReference type="SMR" id="Q99LB2"/>
<dbReference type="BioGRID" id="205827">
    <property type="interactions" value="18"/>
</dbReference>
<dbReference type="FunCoup" id="Q99LB2">
    <property type="interactions" value="1712"/>
</dbReference>
<dbReference type="IntAct" id="Q99LB2">
    <property type="interactions" value="2"/>
</dbReference>
<dbReference type="STRING" id="10090.ENSMUSP00000022821"/>
<dbReference type="GlyGen" id="Q99LB2">
    <property type="glycosylation" value="3 sites, 1 N-linked glycan (1 site), 1 O-linked glycan (1 site)"/>
</dbReference>
<dbReference type="iPTMnet" id="Q99LB2"/>
<dbReference type="PhosphoSitePlus" id="Q99LB2"/>
<dbReference type="SwissPalm" id="Q99LB2"/>
<dbReference type="jPOST" id="Q99LB2"/>
<dbReference type="PaxDb" id="10090-ENSMUSP00000022821"/>
<dbReference type="ProteomicsDB" id="277451"/>
<dbReference type="Pumba" id="Q99LB2"/>
<dbReference type="DNASU" id="28200"/>
<dbReference type="Ensembl" id="ENSMUST00000022821.8">
    <property type="protein sequence ID" value="ENSMUSP00000022821.7"/>
    <property type="gene ID" value="ENSMUSG00000022210.8"/>
</dbReference>
<dbReference type="GeneID" id="28200"/>
<dbReference type="KEGG" id="mmu:28200"/>
<dbReference type="UCSC" id="uc007tym.2">
    <property type="organism name" value="mouse"/>
</dbReference>
<dbReference type="AGR" id="MGI:90169"/>
<dbReference type="CTD" id="10901"/>
<dbReference type="MGI" id="MGI:90169">
    <property type="gene designation" value="Dhrs4"/>
</dbReference>
<dbReference type="VEuPathDB" id="HostDB:ENSMUSG00000022210"/>
<dbReference type="eggNOG" id="KOG0725">
    <property type="taxonomic scope" value="Eukaryota"/>
</dbReference>
<dbReference type="GeneTree" id="ENSGT00940000158919"/>
<dbReference type="HOGENOM" id="CLU_010194_1_1_1"/>
<dbReference type="InParanoid" id="Q99LB2"/>
<dbReference type="OMA" id="WEVANVI"/>
<dbReference type="OrthoDB" id="3592703at2759"/>
<dbReference type="PhylomeDB" id="Q99LB2"/>
<dbReference type="TreeFam" id="TF315405"/>
<dbReference type="Reactome" id="R-MMU-5365859">
    <property type="pathway name" value="RA biosynthesis pathway"/>
</dbReference>
<dbReference type="Reactome" id="R-MMU-9033241">
    <property type="pathway name" value="Peroxisomal protein import"/>
</dbReference>
<dbReference type="BioGRID-ORCS" id="28200">
    <property type="hits" value="3 hits in 81 CRISPR screens"/>
</dbReference>
<dbReference type="CD-CODE" id="CE726F99">
    <property type="entry name" value="Postsynaptic density"/>
</dbReference>
<dbReference type="ChiTaRS" id="Dhrs4">
    <property type="organism name" value="mouse"/>
</dbReference>
<dbReference type="PRO" id="PR:Q99LB2"/>
<dbReference type="Proteomes" id="UP000000589">
    <property type="component" value="Chromosome 14"/>
</dbReference>
<dbReference type="RNAct" id="Q99LB2">
    <property type="molecule type" value="protein"/>
</dbReference>
<dbReference type="Bgee" id="ENSMUSG00000022210">
    <property type="expression patterns" value="Expressed in right kidney and 266 other cell types or tissues"/>
</dbReference>
<dbReference type="ExpressionAtlas" id="Q99LB2">
    <property type="expression patterns" value="baseline and differential"/>
</dbReference>
<dbReference type="GO" id="GO:0005739">
    <property type="term" value="C:mitochondrion"/>
    <property type="evidence" value="ECO:0000314"/>
    <property type="project" value="UniProtKB"/>
</dbReference>
<dbReference type="GO" id="GO:0005777">
    <property type="term" value="C:peroxisome"/>
    <property type="evidence" value="ECO:0000314"/>
    <property type="project" value="MGI"/>
</dbReference>
<dbReference type="GO" id="GO:0052650">
    <property type="term" value="F:all-trans-retinol dehydrogenase (NADP+) activity"/>
    <property type="evidence" value="ECO:0000250"/>
    <property type="project" value="UniProtKB"/>
</dbReference>
<dbReference type="GO" id="GO:0004090">
    <property type="term" value="F:carbonyl reductase (NADPH) activity"/>
    <property type="evidence" value="ECO:0007669"/>
    <property type="project" value="UniProtKB-EC"/>
</dbReference>
<dbReference type="GO" id="GO:0042802">
    <property type="term" value="F:identical protein binding"/>
    <property type="evidence" value="ECO:0000250"/>
    <property type="project" value="UniProtKB"/>
</dbReference>
<dbReference type="GO" id="GO:0001758">
    <property type="term" value="F:retinal dehydrogenase activity"/>
    <property type="evidence" value="ECO:0000314"/>
    <property type="project" value="MGI"/>
</dbReference>
<dbReference type="GO" id="GO:0042180">
    <property type="term" value="P:ketone metabolic process"/>
    <property type="evidence" value="ECO:0000250"/>
    <property type="project" value="UniProtKB"/>
</dbReference>
<dbReference type="GO" id="GO:0042574">
    <property type="term" value="P:retinal metabolic process"/>
    <property type="evidence" value="ECO:0000314"/>
    <property type="project" value="MGI"/>
</dbReference>
<dbReference type="GO" id="GO:0008202">
    <property type="term" value="P:steroid metabolic process"/>
    <property type="evidence" value="ECO:0000250"/>
    <property type="project" value="UniProtKB"/>
</dbReference>
<dbReference type="CDD" id="cd08936">
    <property type="entry name" value="CR_SDR_c"/>
    <property type="match status" value="1"/>
</dbReference>
<dbReference type="FunFam" id="3.40.50.720:FF:000084">
    <property type="entry name" value="Short-chain dehydrogenase reductase"/>
    <property type="match status" value="1"/>
</dbReference>
<dbReference type="Gene3D" id="3.40.50.720">
    <property type="entry name" value="NAD(P)-binding Rossmann-like Domain"/>
    <property type="match status" value="1"/>
</dbReference>
<dbReference type="InterPro" id="IPR036291">
    <property type="entry name" value="NAD(P)-bd_dom_sf"/>
</dbReference>
<dbReference type="InterPro" id="IPR020904">
    <property type="entry name" value="Sc_DH/Rdtase_CS"/>
</dbReference>
<dbReference type="InterPro" id="IPR002347">
    <property type="entry name" value="SDR_fam"/>
</dbReference>
<dbReference type="NCBIfam" id="NF005559">
    <property type="entry name" value="PRK07231.1"/>
    <property type="match status" value="1"/>
</dbReference>
<dbReference type="PANTHER" id="PTHR43943">
    <property type="entry name" value="DEHYDROGENASE/REDUCTASE (SDR FAMILY) MEMBER 4"/>
    <property type="match status" value="1"/>
</dbReference>
<dbReference type="PANTHER" id="PTHR43943:SF8">
    <property type="entry name" value="DEHYDROGENASE_REDUCTASE SDR FAMILY MEMBER 4-RELATED"/>
    <property type="match status" value="1"/>
</dbReference>
<dbReference type="Pfam" id="PF13561">
    <property type="entry name" value="adh_short_C2"/>
    <property type="match status" value="1"/>
</dbReference>
<dbReference type="PRINTS" id="PR00081">
    <property type="entry name" value="GDHRDH"/>
</dbReference>
<dbReference type="PRINTS" id="PR00080">
    <property type="entry name" value="SDRFAMILY"/>
</dbReference>
<dbReference type="SUPFAM" id="SSF51735">
    <property type="entry name" value="NAD(P)-binding Rossmann-fold domains"/>
    <property type="match status" value="1"/>
</dbReference>
<dbReference type="PROSITE" id="PS00061">
    <property type="entry name" value="ADH_SHORT"/>
    <property type="match status" value="1"/>
</dbReference>
<name>DHRS4_MOUSE</name>
<organism>
    <name type="scientific">Mus musculus</name>
    <name type="common">Mouse</name>
    <dbReference type="NCBI Taxonomy" id="10090"/>
    <lineage>
        <taxon>Eukaryota</taxon>
        <taxon>Metazoa</taxon>
        <taxon>Chordata</taxon>
        <taxon>Craniata</taxon>
        <taxon>Vertebrata</taxon>
        <taxon>Euteleostomi</taxon>
        <taxon>Mammalia</taxon>
        <taxon>Eutheria</taxon>
        <taxon>Euarchontoglires</taxon>
        <taxon>Glires</taxon>
        <taxon>Rodentia</taxon>
        <taxon>Myomorpha</taxon>
        <taxon>Muroidea</taxon>
        <taxon>Muridae</taxon>
        <taxon>Murinae</taxon>
        <taxon>Mus</taxon>
        <taxon>Mus</taxon>
    </lineage>
</organism>
<evidence type="ECO:0000250" key="1">
    <source>
        <dbReference type="UniProtKB" id="Q8WNV7"/>
    </source>
</evidence>
<evidence type="ECO:0000250" key="2">
    <source>
        <dbReference type="UniProtKB" id="Q99714"/>
    </source>
</evidence>
<evidence type="ECO:0000250" key="3">
    <source>
        <dbReference type="UniProtKB" id="Q9BTZ2"/>
    </source>
</evidence>
<evidence type="ECO:0000255" key="4">
    <source>
        <dbReference type="PROSITE-ProRule" id="PRU10001"/>
    </source>
</evidence>
<evidence type="ECO:0000305" key="5"/>
<evidence type="ECO:0000312" key="6">
    <source>
        <dbReference type="MGI" id="MGI:90169"/>
    </source>
</evidence>
<evidence type="ECO:0007744" key="7">
    <source>
    </source>
</evidence>
<evidence type="ECO:0007744" key="8">
    <source>
    </source>
</evidence>
<evidence type="ECO:0007744" key="9">
    <source>
    </source>
</evidence>
<comment type="function">
    <text evidence="1">NADPH-dependent oxidoreductase which catalyzes the reduction of a variety of compounds bearing carbonyl groups including ketosteroids, alpha-dicarbonyl compounds, aldehydes, aromatic ketones and quinones. Reduces all-trans-retinal and 9-cis retinal. Reduces 3-ketosteroids and benzil into 3alpha-hydroxysteroids and S-benzoin, respectively, in contrast to the stereoselectivity of primates DHRS4s which produce 3beta-hydroxysteroids and R-benzoin. In the reverse reaction, catalyzes the NADP-dependent oxidation of 3alpha-hydroxysteroids and alcohol, but with much lower efficiency. Involved in the metabolism of 3alpha-hydroxysteroids, retinoid, isatin and xenobiotic carbonyl compounds.</text>
</comment>
<comment type="catalytic activity">
    <reaction evidence="1">
        <text>a secondary alcohol + NADP(+) = a ketone + NADPH + H(+)</text>
        <dbReference type="Rhea" id="RHEA:19257"/>
        <dbReference type="ChEBI" id="CHEBI:15378"/>
        <dbReference type="ChEBI" id="CHEBI:17087"/>
        <dbReference type="ChEBI" id="CHEBI:35681"/>
        <dbReference type="ChEBI" id="CHEBI:57783"/>
        <dbReference type="ChEBI" id="CHEBI:58349"/>
        <dbReference type="EC" id="1.1.1.184"/>
    </reaction>
    <physiologicalReaction direction="right-to-left" evidence="1">
        <dbReference type="Rhea" id="RHEA:19259"/>
    </physiologicalReaction>
</comment>
<comment type="catalytic activity">
    <reaction evidence="1">
        <text>3alpha-hydroxy-5beta-pregnan-20-one + NADP(+) = 5beta-pregnan-3,20-dione + NADPH + H(+)</text>
        <dbReference type="Rhea" id="RHEA:69016"/>
        <dbReference type="ChEBI" id="CHEBI:1712"/>
        <dbReference type="ChEBI" id="CHEBI:15378"/>
        <dbReference type="ChEBI" id="CHEBI:30154"/>
        <dbReference type="ChEBI" id="CHEBI:57783"/>
        <dbReference type="ChEBI" id="CHEBI:58349"/>
    </reaction>
    <physiologicalReaction direction="left-to-right" evidence="1">
        <dbReference type="Rhea" id="RHEA:69017"/>
    </physiologicalReaction>
</comment>
<comment type="catalytic activity">
    <reaction evidence="1">
        <text>5beta-dihydrotestosterone + NADPH + H(+) = 5beta-androstane-3alpha,17beta-diol + NADP(+)</text>
        <dbReference type="Rhea" id="RHEA:69028"/>
        <dbReference type="ChEBI" id="CHEBI:2150"/>
        <dbReference type="ChEBI" id="CHEBI:15378"/>
        <dbReference type="ChEBI" id="CHEBI:36714"/>
        <dbReference type="ChEBI" id="CHEBI:57783"/>
        <dbReference type="ChEBI" id="CHEBI:58349"/>
    </reaction>
    <physiologicalReaction direction="left-to-right" evidence="1">
        <dbReference type="Rhea" id="RHEA:69029"/>
    </physiologicalReaction>
</comment>
<comment type="catalytic activity">
    <reaction evidence="1">
        <text>all-trans-retinol + NADP(+) = all-trans-retinal + NADPH + H(+)</text>
        <dbReference type="Rhea" id="RHEA:25033"/>
        <dbReference type="ChEBI" id="CHEBI:15378"/>
        <dbReference type="ChEBI" id="CHEBI:17336"/>
        <dbReference type="ChEBI" id="CHEBI:17898"/>
        <dbReference type="ChEBI" id="CHEBI:57783"/>
        <dbReference type="ChEBI" id="CHEBI:58349"/>
        <dbReference type="EC" id="1.1.1.300"/>
    </reaction>
    <physiologicalReaction direction="right-to-left" evidence="1">
        <dbReference type="Rhea" id="RHEA:25035"/>
    </physiologicalReaction>
</comment>
<comment type="catalytic activity">
    <reaction evidence="1">
        <text>isatin + NADPH + H(+) = 3-hydroxyindolin-2-one + NADP(+)</text>
        <dbReference type="Rhea" id="RHEA:68608"/>
        <dbReference type="ChEBI" id="CHEBI:15378"/>
        <dbReference type="ChEBI" id="CHEBI:27539"/>
        <dbReference type="ChEBI" id="CHEBI:28536"/>
        <dbReference type="ChEBI" id="CHEBI:57783"/>
        <dbReference type="ChEBI" id="CHEBI:58349"/>
    </reaction>
    <physiologicalReaction direction="left-to-right" evidence="1">
        <dbReference type="Rhea" id="RHEA:68609"/>
    </physiologicalReaction>
</comment>
<comment type="subunit">
    <text evidence="1">Homotetramer.</text>
</comment>
<comment type="subcellular location">
    <subcellularLocation>
        <location evidence="1">Peroxisome</location>
    </subcellularLocation>
</comment>
<comment type="domain">
    <text evidence="1">The C-terminus peroxisomal targeting signal tripeptide is important for peroxisomal import. Once in the peroxisome, it is involved in intersubunit interactions.</text>
</comment>
<comment type="domain">
    <text evidence="1">Three specific residues, Phe-177, Leu-180 and Asn-196 are conserved between non-primate mammals whereas the respective residues are serine, phenylalanine and threonine in primates. The two residues at positions 177 and 180 are molecular determinants responsible for the stereoselective reduction of 3-ketosteroids and benzil. The presence of an asparagine at position 196 is important for the maintenance of the quaternary structure resulting in stability at cold temperature and improved catalytic activity toward retinal.</text>
</comment>
<comment type="miscellaneous">
    <text evidence="1">Primate DHRS4s display different stereoselectivity and catalytic efficiency in the oxidoreduction of some substrates as compared to other mammal DHRS4s due to a difference in conserved amino acid residues.</text>
</comment>
<comment type="similarity">
    <text evidence="5">Belongs to the short-chain dehydrogenases/reductases (SDR) family.</text>
</comment>
<comment type="sequence caution" evidence="5">
    <conflict type="erroneous initiation">
        <sequence resource="EMBL-CDS" id="AAH03484"/>
    </conflict>
    <text>Truncated N-terminus.</text>
</comment>
<comment type="sequence caution" evidence="5">
    <conflict type="erroneous initiation">
        <sequence resource="EMBL-CDS" id="BAB18776"/>
    </conflict>
    <text>Truncated N-terminus.</text>
</comment>
<sequence length="279" mass="29885">MQKAGRLLGGWTQAWMSVRMASSGLTRRNPLSNKVALVTASTDGIGFAIARRLAEDGAHVVVSSRKQQNVDRAVATLQGEGLSVTGIVCHVGKAEDREKLITTALKRHQGIDILVSNAAVNPFFGNLMDVTEEVWDKVLSINVTATAMMIKAVVPEMEKRGGGSVVIVGSVAGFTRFPSLGPYNVSKTALLGLTKNFAAELAPKNIRVNCLAPGLIKTRFSSVLWEEKAREDFIKEAMQIRRLGKPEDCAGIVSFLCSEDASYINGETVVVGGGTPSRL</sequence>